<feature type="chain" id="PRO_1000089634" description="Holliday junction branch migration complex subunit RuvB">
    <location>
        <begin position="1"/>
        <end position="342"/>
    </location>
</feature>
<feature type="region of interest" description="Large ATPase domain (RuvB-L)" evidence="1">
    <location>
        <begin position="1"/>
        <end position="181"/>
    </location>
</feature>
<feature type="region of interest" description="Small ATPAse domain (RuvB-S)" evidence="1">
    <location>
        <begin position="182"/>
        <end position="252"/>
    </location>
</feature>
<feature type="region of interest" description="Head domain (RuvB-H)" evidence="1">
    <location>
        <begin position="255"/>
        <end position="342"/>
    </location>
</feature>
<feature type="binding site" evidence="1">
    <location>
        <position position="20"/>
    </location>
    <ligand>
        <name>ATP</name>
        <dbReference type="ChEBI" id="CHEBI:30616"/>
    </ligand>
</feature>
<feature type="binding site" evidence="1">
    <location>
        <position position="21"/>
    </location>
    <ligand>
        <name>ATP</name>
        <dbReference type="ChEBI" id="CHEBI:30616"/>
    </ligand>
</feature>
<feature type="binding site" evidence="1">
    <location>
        <position position="62"/>
    </location>
    <ligand>
        <name>ATP</name>
        <dbReference type="ChEBI" id="CHEBI:30616"/>
    </ligand>
</feature>
<feature type="binding site" evidence="1">
    <location>
        <position position="65"/>
    </location>
    <ligand>
        <name>ATP</name>
        <dbReference type="ChEBI" id="CHEBI:30616"/>
    </ligand>
</feature>
<feature type="binding site" evidence="1">
    <location>
        <position position="66"/>
    </location>
    <ligand>
        <name>ATP</name>
        <dbReference type="ChEBI" id="CHEBI:30616"/>
    </ligand>
</feature>
<feature type="binding site" evidence="1">
    <location>
        <position position="66"/>
    </location>
    <ligand>
        <name>Mg(2+)</name>
        <dbReference type="ChEBI" id="CHEBI:18420"/>
    </ligand>
</feature>
<feature type="binding site" evidence="1">
    <location>
        <position position="67"/>
    </location>
    <ligand>
        <name>ATP</name>
        <dbReference type="ChEBI" id="CHEBI:30616"/>
    </ligand>
</feature>
<feature type="binding site" evidence="1">
    <location>
        <begin position="128"/>
        <end position="130"/>
    </location>
    <ligand>
        <name>ATP</name>
        <dbReference type="ChEBI" id="CHEBI:30616"/>
    </ligand>
</feature>
<feature type="binding site" evidence="1">
    <location>
        <position position="171"/>
    </location>
    <ligand>
        <name>ATP</name>
        <dbReference type="ChEBI" id="CHEBI:30616"/>
    </ligand>
</feature>
<feature type="binding site" evidence="1">
    <location>
        <position position="181"/>
    </location>
    <ligand>
        <name>ATP</name>
        <dbReference type="ChEBI" id="CHEBI:30616"/>
    </ligand>
</feature>
<feature type="binding site" evidence="1">
    <location>
        <position position="218"/>
    </location>
    <ligand>
        <name>ATP</name>
        <dbReference type="ChEBI" id="CHEBI:30616"/>
    </ligand>
</feature>
<feature type="binding site" evidence="1">
    <location>
        <position position="310"/>
    </location>
    <ligand>
        <name>DNA</name>
        <dbReference type="ChEBI" id="CHEBI:16991"/>
    </ligand>
</feature>
<feature type="binding site" evidence="1">
    <location>
        <position position="315"/>
    </location>
    <ligand>
        <name>DNA</name>
        <dbReference type="ChEBI" id="CHEBI:16991"/>
    </ligand>
</feature>
<comment type="function">
    <text evidence="1">The RuvA-RuvB-RuvC complex processes Holliday junction (HJ) DNA during genetic recombination and DNA repair, while the RuvA-RuvB complex plays an important role in the rescue of blocked DNA replication forks via replication fork reversal (RFR). RuvA specifically binds to HJ cruciform DNA, conferring on it an open structure. The RuvB hexamer acts as an ATP-dependent pump, pulling dsDNA into and through the RuvAB complex. RuvB forms 2 homohexamers on either side of HJ DNA bound by 1 or 2 RuvA tetramers; 4 subunits per hexamer contact DNA at a time. Coordinated motions by a converter formed by DNA-disengaged RuvB subunits stimulates ATP hydrolysis and nucleotide exchange. Immobilization of the converter enables RuvB to convert the ATP-contained energy into a lever motion, pulling 2 nucleotides of DNA out of the RuvA tetramer per ATP hydrolyzed, thus driving DNA branch migration. The RuvB motors rotate together with the DNA substrate, which together with the progressing nucleotide cycle form the mechanistic basis for DNA recombination by continuous HJ branch migration. Branch migration allows RuvC to scan DNA until it finds its consensus sequence, where it cleaves and resolves cruciform DNA.</text>
</comment>
<comment type="catalytic activity">
    <reaction evidence="1">
        <text>ATP + H2O = ADP + phosphate + H(+)</text>
        <dbReference type="Rhea" id="RHEA:13065"/>
        <dbReference type="ChEBI" id="CHEBI:15377"/>
        <dbReference type="ChEBI" id="CHEBI:15378"/>
        <dbReference type="ChEBI" id="CHEBI:30616"/>
        <dbReference type="ChEBI" id="CHEBI:43474"/>
        <dbReference type="ChEBI" id="CHEBI:456216"/>
    </reaction>
</comment>
<comment type="subunit">
    <text evidence="1">Homohexamer. Forms an RuvA(8)-RuvB(12)-Holliday junction (HJ) complex. HJ DNA is sandwiched between 2 RuvA tetramers; dsDNA enters through RuvA and exits via RuvB. An RuvB hexamer assembles on each DNA strand where it exits the tetramer. Each RuvB hexamer is contacted by two RuvA subunits (via domain III) on 2 adjacent RuvB subunits; this complex drives branch migration. In the full resolvosome a probable DNA-RuvA(4)-RuvB(12)-RuvC(2) complex forms which resolves the HJ.</text>
</comment>
<comment type="subcellular location">
    <subcellularLocation>
        <location evidence="1">Cytoplasm</location>
    </subcellularLocation>
</comment>
<comment type="domain">
    <text evidence="1">Has 3 domains, the large (RuvB-L) and small ATPase (RuvB-S) domains and the C-terminal head (RuvB-H) domain. The head domain binds DNA, while the ATPase domains jointly bind ATP, ADP or are empty depending on the state of the subunit in the translocation cycle. During a single DNA translocation step the structure of each domain remains the same, but their relative positions change.</text>
</comment>
<comment type="similarity">
    <text evidence="1">Belongs to the RuvB family.</text>
</comment>
<organism>
    <name type="scientific">Clostridium botulinum (strain Loch Maree / Type A3)</name>
    <dbReference type="NCBI Taxonomy" id="498214"/>
    <lineage>
        <taxon>Bacteria</taxon>
        <taxon>Bacillati</taxon>
        <taxon>Bacillota</taxon>
        <taxon>Clostridia</taxon>
        <taxon>Eubacteriales</taxon>
        <taxon>Clostridiaceae</taxon>
        <taxon>Clostridium</taxon>
    </lineage>
</organism>
<evidence type="ECO:0000255" key="1">
    <source>
        <dbReference type="HAMAP-Rule" id="MF_00016"/>
    </source>
</evidence>
<dbReference type="EC" id="3.6.4.-" evidence="1"/>
<dbReference type="EMBL" id="CP000962">
    <property type="protein sequence ID" value="ACA56272.1"/>
    <property type="molecule type" value="Genomic_DNA"/>
</dbReference>
<dbReference type="RefSeq" id="WP_012344164.1">
    <property type="nucleotide sequence ID" value="NC_010520.1"/>
</dbReference>
<dbReference type="SMR" id="B1L0B2"/>
<dbReference type="KEGG" id="cbl:CLK_2463"/>
<dbReference type="HOGENOM" id="CLU_055599_1_0_9"/>
<dbReference type="GO" id="GO:0005737">
    <property type="term" value="C:cytoplasm"/>
    <property type="evidence" value="ECO:0007669"/>
    <property type="project" value="UniProtKB-SubCell"/>
</dbReference>
<dbReference type="GO" id="GO:0048476">
    <property type="term" value="C:Holliday junction resolvase complex"/>
    <property type="evidence" value="ECO:0007669"/>
    <property type="project" value="UniProtKB-UniRule"/>
</dbReference>
<dbReference type="GO" id="GO:0005524">
    <property type="term" value="F:ATP binding"/>
    <property type="evidence" value="ECO:0007669"/>
    <property type="project" value="UniProtKB-UniRule"/>
</dbReference>
<dbReference type="GO" id="GO:0016887">
    <property type="term" value="F:ATP hydrolysis activity"/>
    <property type="evidence" value="ECO:0007669"/>
    <property type="project" value="InterPro"/>
</dbReference>
<dbReference type="GO" id="GO:0000400">
    <property type="term" value="F:four-way junction DNA binding"/>
    <property type="evidence" value="ECO:0007669"/>
    <property type="project" value="UniProtKB-UniRule"/>
</dbReference>
<dbReference type="GO" id="GO:0009378">
    <property type="term" value="F:four-way junction helicase activity"/>
    <property type="evidence" value="ECO:0007669"/>
    <property type="project" value="InterPro"/>
</dbReference>
<dbReference type="GO" id="GO:0006310">
    <property type="term" value="P:DNA recombination"/>
    <property type="evidence" value="ECO:0007669"/>
    <property type="project" value="UniProtKB-UniRule"/>
</dbReference>
<dbReference type="GO" id="GO:0006281">
    <property type="term" value="P:DNA repair"/>
    <property type="evidence" value="ECO:0007669"/>
    <property type="project" value="UniProtKB-UniRule"/>
</dbReference>
<dbReference type="CDD" id="cd00009">
    <property type="entry name" value="AAA"/>
    <property type="match status" value="1"/>
</dbReference>
<dbReference type="Gene3D" id="1.10.8.60">
    <property type="match status" value="1"/>
</dbReference>
<dbReference type="Gene3D" id="3.40.50.300">
    <property type="entry name" value="P-loop containing nucleotide triphosphate hydrolases"/>
    <property type="match status" value="1"/>
</dbReference>
<dbReference type="Gene3D" id="1.10.10.10">
    <property type="entry name" value="Winged helix-like DNA-binding domain superfamily/Winged helix DNA-binding domain"/>
    <property type="match status" value="1"/>
</dbReference>
<dbReference type="HAMAP" id="MF_00016">
    <property type="entry name" value="DNA_HJ_migration_RuvB"/>
    <property type="match status" value="1"/>
</dbReference>
<dbReference type="InterPro" id="IPR003593">
    <property type="entry name" value="AAA+_ATPase"/>
</dbReference>
<dbReference type="InterPro" id="IPR041445">
    <property type="entry name" value="AAA_lid_4"/>
</dbReference>
<dbReference type="InterPro" id="IPR004605">
    <property type="entry name" value="DNA_helicase_Holl-junc_RuvB"/>
</dbReference>
<dbReference type="InterPro" id="IPR027417">
    <property type="entry name" value="P-loop_NTPase"/>
</dbReference>
<dbReference type="InterPro" id="IPR008824">
    <property type="entry name" value="RuvB-like_N"/>
</dbReference>
<dbReference type="InterPro" id="IPR008823">
    <property type="entry name" value="RuvB_C"/>
</dbReference>
<dbReference type="InterPro" id="IPR036388">
    <property type="entry name" value="WH-like_DNA-bd_sf"/>
</dbReference>
<dbReference type="InterPro" id="IPR036390">
    <property type="entry name" value="WH_DNA-bd_sf"/>
</dbReference>
<dbReference type="NCBIfam" id="NF000868">
    <property type="entry name" value="PRK00080.1"/>
    <property type="match status" value="1"/>
</dbReference>
<dbReference type="NCBIfam" id="TIGR00635">
    <property type="entry name" value="ruvB"/>
    <property type="match status" value="1"/>
</dbReference>
<dbReference type="PANTHER" id="PTHR42848">
    <property type="match status" value="1"/>
</dbReference>
<dbReference type="PANTHER" id="PTHR42848:SF1">
    <property type="entry name" value="HOLLIDAY JUNCTION BRANCH MIGRATION COMPLEX SUBUNIT RUVB"/>
    <property type="match status" value="1"/>
</dbReference>
<dbReference type="Pfam" id="PF17864">
    <property type="entry name" value="AAA_lid_4"/>
    <property type="match status" value="1"/>
</dbReference>
<dbReference type="Pfam" id="PF05491">
    <property type="entry name" value="RuvB_C"/>
    <property type="match status" value="1"/>
</dbReference>
<dbReference type="Pfam" id="PF05496">
    <property type="entry name" value="RuvB_N"/>
    <property type="match status" value="1"/>
</dbReference>
<dbReference type="SMART" id="SM00382">
    <property type="entry name" value="AAA"/>
    <property type="match status" value="1"/>
</dbReference>
<dbReference type="SUPFAM" id="SSF52540">
    <property type="entry name" value="P-loop containing nucleoside triphosphate hydrolases"/>
    <property type="match status" value="1"/>
</dbReference>
<dbReference type="SUPFAM" id="SSF46785">
    <property type="entry name" value="Winged helix' DNA-binding domain"/>
    <property type="match status" value="1"/>
</dbReference>
<keyword id="KW-0067">ATP-binding</keyword>
<keyword id="KW-0963">Cytoplasm</keyword>
<keyword id="KW-0227">DNA damage</keyword>
<keyword id="KW-0233">DNA recombination</keyword>
<keyword id="KW-0234">DNA repair</keyword>
<keyword id="KW-0238">DNA-binding</keyword>
<keyword id="KW-0378">Hydrolase</keyword>
<keyword id="KW-0547">Nucleotide-binding</keyword>
<accession>B1L0B2</accession>
<name>RUVB_CLOBM</name>
<gene>
    <name evidence="1" type="primary">ruvB</name>
    <name type="ordered locus">CLK_2463</name>
</gene>
<reference key="1">
    <citation type="journal article" date="2007" name="PLoS ONE">
        <title>Analysis of the neurotoxin complex genes in Clostridium botulinum A1-A4 and B1 strains: BoNT/A3, /Ba4 and /B1 clusters are located within plasmids.</title>
        <authorList>
            <person name="Smith T.J."/>
            <person name="Hill K.K."/>
            <person name="Foley B.T."/>
            <person name="Detter J.C."/>
            <person name="Munk A.C."/>
            <person name="Bruce D.C."/>
            <person name="Doggett N.A."/>
            <person name="Smith L.A."/>
            <person name="Marks J.D."/>
            <person name="Xie G."/>
            <person name="Brettin T.S."/>
        </authorList>
    </citation>
    <scope>NUCLEOTIDE SEQUENCE [LARGE SCALE GENOMIC DNA]</scope>
    <source>
        <strain>Loch Maree / Type A3</strain>
    </source>
</reference>
<proteinExistence type="inferred from homology"/>
<sequence length="342" mass="38372">MENRMVTPFDVEDDKEQYSLRPTTLKEYIGQKKVKANLDIFIKAAKKRNESLDHVLFYGPPGLGKTTLANIIANEMTGNLKVTSGPAIEKAGDLAAILTSLTDYDVLFIDEIHRLNRSIEEILYPAMEDYALDIVIGKGAAAKSIRLDLPKFTLIGATTRVGLLTSPLRDRFGMLCAMEFYTDEELMEIVVRSAAILNVNICREAAFEIGKRSRGTPRIANRLLKRVRDYCDVKHDGDIDLQGAKAALDLLEVDKEGLDKIDNKILEAIIFNFKGGPVGLETLAYFIGEELDTIEDVYEPYLIQKGFIMRTPRGRVASEKAYNHFGVTKKEEKDNQVSIFNK</sequence>
<protein>
    <recommendedName>
        <fullName evidence="1">Holliday junction branch migration complex subunit RuvB</fullName>
        <ecNumber evidence="1">3.6.4.-</ecNumber>
    </recommendedName>
</protein>